<evidence type="ECO:0000255" key="1">
    <source>
        <dbReference type="HAMAP-Rule" id="MF_01176"/>
    </source>
</evidence>
<evidence type="ECO:0000256" key="2">
    <source>
        <dbReference type="SAM" id="MobiDB-lite"/>
    </source>
</evidence>
<reference key="1">
    <citation type="journal article" date="2003" name="J. Bacteriol.">
        <title>Xenorhabdus nematophila requires an intact iscRSUA-hscBA-fdx operon to colonize Steinernema carpocapsae nematodes.</title>
        <authorList>
            <person name="Martens E.C."/>
            <person name="Gawronski-Salerno J."/>
            <person name="Vokal D.L."/>
            <person name="Pellitteri M.C."/>
            <person name="Menard M.L."/>
            <person name="Goodrich-Blair H."/>
        </authorList>
    </citation>
    <scope>NUCLEOTIDE SEQUENCE [GENOMIC DNA]</scope>
    <source>
        <strain>ATCC 19061 / DSM 3370 / CCUG 14189 / LMG 1036 / NCIMB 9965 / AN6</strain>
    </source>
</reference>
<reference key="2">
    <citation type="journal article" date="2011" name="PLoS ONE">
        <title>The entomopathogenic bacterial endosymbionts xenorhabdus and photorhabdus: convergent lifestyles from divergent genomes.</title>
        <authorList>
            <person name="Chaston J.M."/>
            <person name="Suen G."/>
            <person name="Tucker S.L."/>
            <person name="Andersen A.W."/>
            <person name="Bhasin A."/>
            <person name="Bode E."/>
            <person name="Bode H.B."/>
            <person name="Brachmann A.O."/>
            <person name="Cowles C.E."/>
            <person name="Cowles K.N."/>
            <person name="Darby C."/>
            <person name="de Leon L."/>
            <person name="Drace K."/>
            <person name="Du Z."/>
            <person name="Givaudan A."/>
            <person name="Herbert Tran E.E."/>
            <person name="Jewell K.A."/>
            <person name="Knack J.J."/>
            <person name="Krasomil-Osterfeld K.C."/>
            <person name="Kukor R."/>
            <person name="Lanois A."/>
            <person name="Latreille P."/>
            <person name="Leimgruber N.K."/>
            <person name="Lipke C.M."/>
            <person name="Liu R."/>
            <person name="Lu X."/>
            <person name="Martens E.C."/>
            <person name="Marri P.R."/>
            <person name="Medigue C."/>
            <person name="Menard M.L."/>
            <person name="Miller N.M."/>
            <person name="Morales-Soto N."/>
            <person name="Norton S."/>
            <person name="Ogier J.C."/>
            <person name="Orchard S.S."/>
            <person name="Park D."/>
            <person name="Park Y."/>
            <person name="Qurollo B.A."/>
            <person name="Sugar D.R."/>
            <person name="Richards G.R."/>
            <person name="Rouy Z."/>
            <person name="Slominski B."/>
            <person name="Slominski K."/>
            <person name="Snyder H."/>
            <person name="Tjaden B.C."/>
            <person name="van der Hoeven R."/>
            <person name="Welch R.D."/>
            <person name="Wheeler C."/>
            <person name="Xiang B."/>
            <person name="Barbazuk B."/>
            <person name="Gaudriault S."/>
            <person name="Goodner B."/>
            <person name="Slater S.C."/>
            <person name="Forst S."/>
            <person name="Goldman B.S."/>
            <person name="Goodrich-Blair H."/>
        </authorList>
    </citation>
    <scope>NUCLEOTIDE SEQUENCE [LARGE SCALE GENOMIC DNA]</scope>
    <source>
        <strain>ATCC 19061 / DSM 3370 / CCUG 14189 / LMG 1036 / NCIMB 9965 / AN6</strain>
    </source>
</reference>
<feature type="chain" id="PRO_0000268934" description="HTH-type transcriptional regulator IscR">
    <location>
        <begin position="1"/>
        <end position="164"/>
    </location>
</feature>
<feature type="domain" description="HTH rrf2-type" evidence="1">
    <location>
        <begin position="2"/>
        <end position="131"/>
    </location>
</feature>
<feature type="DNA-binding region" description="H-T-H motif" evidence="1">
    <location>
        <begin position="28"/>
        <end position="51"/>
    </location>
</feature>
<feature type="region of interest" description="Disordered" evidence="2">
    <location>
        <begin position="140"/>
        <end position="164"/>
    </location>
</feature>
<feature type="compositionally biased region" description="Polar residues" evidence="2">
    <location>
        <begin position="152"/>
        <end position="164"/>
    </location>
</feature>
<feature type="binding site" evidence="1">
    <location>
        <position position="92"/>
    </location>
    <ligand>
        <name>[2Fe-2S] cluster</name>
        <dbReference type="ChEBI" id="CHEBI:190135"/>
    </ligand>
</feature>
<feature type="binding site" evidence="1">
    <location>
        <position position="98"/>
    </location>
    <ligand>
        <name>[2Fe-2S] cluster</name>
        <dbReference type="ChEBI" id="CHEBI:190135"/>
    </ligand>
</feature>
<feature type="binding site" evidence="1">
    <location>
        <position position="104"/>
    </location>
    <ligand>
        <name>[2Fe-2S] cluster</name>
        <dbReference type="ChEBI" id="CHEBI:190135"/>
    </ligand>
</feature>
<sequence>MRLTSKGRYAVTAMLDVALHSQEGPVPLADISERQGISLSYLEQLFSRLRKNGLVSSVRGPGGGYLLGRDAGRIFVAEVISAVDESVDATRCQGKEGCQGGDRCLTHALWRDLSERITSFLGSISLEELVKNQEVLDVADRQDSDKRRTPNGRPQETINVNLRA</sequence>
<accession>Q8GLE9</accession>
<accession>D3VLM3</accession>
<comment type="function">
    <text evidence="1">Regulates the transcription of several operons and genes involved in the biogenesis of Fe-S clusters and Fe-S-containing proteins.</text>
</comment>
<comment type="cofactor">
    <cofactor evidence="1">
        <name>[2Fe-2S] cluster</name>
        <dbReference type="ChEBI" id="CHEBI:190135"/>
    </cofactor>
    <text evidence="1">Binds 1 [2Fe-2S] cluster.</text>
</comment>
<organism>
    <name type="scientific">Xenorhabdus nematophila (strain ATCC 19061 / DSM 3370 / CCUG 14189 / LMG 1036 / NCIMB 9965 / AN6)</name>
    <dbReference type="NCBI Taxonomy" id="406817"/>
    <lineage>
        <taxon>Bacteria</taxon>
        <taxon>Pseudomonadati</taxon>
        <taxon>Pseudomonadota</taxon>
        <taxon>Gammaproteobacteria</taxon>
        <taxon>Enterobacterales</taxon>
        <taxon>Morganellaceae</taxon>
        <taxon>Xenorhabdus</taxon>
    </lineage>
</organism>
<gene>
    <name evidence="1" type="primary">iscR</name>
    <name type="ordered locus">XNC1_3297</name>
</gene>
<dbReference type="EMBL" id="AY138456">
    <property type="protein sequence ID" value="AAN17744.1"/>
    <property type="molecule type" value="Genomic_DNA"/>
</dbReference>
<dbReference type="EMBL" id="FN667742">
    <property type="protein sequence ID" value="CBJ91349.1"/>
    <property type="molecule type" value="Genomic_DNA"/>
</dbReference>
<dbReference type="RefSeq" id="WP_010847162.1">
    <property type="nucleotide sequence ID" value="NC_014228.1"/>
</dbReference>
<dbReference type="SMR" id="Q8GLE9"/>
<dbReference type="STRING" id="406817.XNC1_3297"/>
<dbReference type="GeneID" id="24902625"/>
<dbReference type="KEGG" id="xne:XNC1_3297"/>
<dbReference type="eggNOG" id="COG1959">
    <property type="taxonomic scope" value="Bacteria"/>
</dbReference>
<dbReference type="HOGENOM" id="CLU_107144_0_0_6"/>
<dbReference type="Proteomes" id="UP000008075">
    <property type="component" value="Chromosome"/>
</dbReference>
<dbReference type="GO" id="GO:0005829">
    <property type="term" value="C:cytosol"/>
    <property type="evidence" value="ECO:0007669"/>
    <property type="project" value="TreeGrafter"/>
</dbReference>
<dbReference type="GO" id="GO:0051537">
    <property type="term" value="F:2 iron, 2 sulfur cluster binding"/>
    <property type="evidence" value="ECO:0007669"/>
    <property type="project" value="UniProtKB-KW"/>
</dbReference>
<dbReference type="GO" id="GO:0003700">
    <property type="term" value="F:DNA-binding transcription factor activity"/>
    <property type="evidence" value="ECO:0007669"/>
    <property type="project" value="UniProtKB-UniRule"/>
</dbReference>
<dbReference type="GO" id="GO:0003690">
    <property type="term" value="F:double-stranded DNA binding"/>
    <property type="evidence" value="ECO:0007669"/>
    <property type="project" value="UniProtKB-UniRule"/>
</dbReference>
<dbReference type="GO" id="GO:0005506">
    <property type="term" value="F:iron ion binding"/>
    <property type="evidence" value="ECO:0007669"/>
    <property type="project" value="UniProtKB-UniRule"/>
</dbReference>
<dbReference type="FunFam" id="1.10.10.10:FF:000026">
    <property type="entry name" value="HTH-type transcriptional regulator IscR"/>
    <property type="match status" value="1"/>
</dbReference>
<dbReference type="Gene3D" id="1.10.10.10">
    <property type="entry name" value="Winged helix-like DNA-binding domain superfamily/Winged helix DNA-binding domain"/>
    <property type="match status" value="1"/>
</dbReference>
<dbReference type="HAMAP" id="MF_01176">
    <property type="entry name" value="HTH_type_IscR"/>
    <property type="match status" value="1"/>
</dbReference>
<dbReference type="InterPro" id="IPR010242">
    <property type="entry name" value="TF_HTH_IscR"/>
</dbReference>
<dbReference type="InterPro" id="IPR030489">
    <property type="entry name" value="TR_Rrf2-type_CS"/>
</dbReference>
<dbReference type="InterPro" id="IPR000944">
    <property type="entry name" value="Tscrpt_reg_Rrf2"/>
</dbReference>
<dbReference type="InterPro" id="IPR036388">
    <property type="entry name" value="WH-like_DNA-bd_sf"/>
</dbReference>
<dbReference type="InterPro" id="IPR036390">
    <property type="entry name" value="WH_DNA-bd_sf"/>
</dbReference>
<dbReference type="NCBIfam" id="TIGR02010">
    <property type="entry name" value="IscR"/>
    <property type="match status" value="1"/>
</dbReference>
<dbReference type="NCBIfam" id="NF008110">
    <property type="entry name" value="PRK10857.1"/>
    <property type="match status" value="1"/>
</dbReference>
<dbReference type="NCBIfam" id="TIGR00738">
    <property type="entry name" value="rrf2_super"/>
    <property type="match status" value="1"/>
</dbReference>
<dbReference type="PANTHER" id="PTHR33221:SF5">
    <property type="entry name" value="HTH-TYPE TRANSCRIPTIONAL REGULATOR ISCR"/>
    <property type="match status" value="1"/>
</dbReference>
<dbReference type="PANTHER" id="PTHR33221">
    <property type="entry name" value="WINGED HELIX-TURN-HELIX TRANSCRIPTIONAL REGULATOR, RRF2 FAMILY"/>
    <property type="match status" value="1"/>
</dbReference>
<dbReference type="Pfam" id="PF02082">
    <property type="entry name" value="Rrf2"/>
    <property type="match status" value="1"/>
</dbReference>
<dbReference type="SUPFAM" id="SSF46785">
    <property type="entry name" value="Winged helix' DNA-binding domain"/>
    <property type="match status" value="1"/>
</dbReference>
<dbReference type="PROSITE" id="PS01332">
    <property type="entry name" value="HTH_RRF2_1"/>
    <property type="match status" value="1"/>
</dbReference>
<dbReference type="PROSITE" id="PS51197">
    <property type="entry name" value="HTH_RRF2_2"/>
    <property type="match status" value="1"/>
</dbReference>
<name>ISCR_XENNA</name>
<keyword id="KW-0001">2Fe-2S</keyword>
<keyword id="KW-0010">Activator</keyword>
<keyword id="KW-0238">DNA-binding</keyword>
<keyword id="KW-0408">Iron</keyword>
<keyword id="KW-0411">Iron-sulfur</keyword>
<keyword id="KW-0479">Metal-binding</keyword>
<keyword id="KW-1185">Reference proteome</keyword>
<keyword id="KW-0678">Repressor</keyword>
<keyword id="KW-0804">Transcription</keyword>
<keyword id="KW-0805">Transcription regulation</keyword>
<proteinExistence type="inferred from homology"/>
<protein>
    <recommendedName>
        <fullName evidence="1">HTH-type transcriptional regulator IscR</fullName>
    </recommendedName>
</protein>